<accession>F1SYF1</accession>
<name>CY176_POSPM</name>
<organism>
    <name type="scientific">Postia placenta (strain ATCC 44394 / Madison 698-R)</name>
    <name type="common">Brown rot fungus</name>
    <name type="synonym">Poria monticola</name>
    <dbReference type="NCBI Taxonomy" id="561896"/>
    <lineage>
        <taxon>Eukaryota</taxon>
        <taxon>Fungi</taxon>
        <taxon>Dikarya</taxon>
        <taxon>Basidiomycota</taxon>
        <taxon>Agaricomycotina</taxon>
        <taxon>Agaricomycetes</taxon>
        <taxon>Polyporales</taxon>
        <taxon>Adustoporiaceae</taxon>
        <taxon>Rhodonia</taxon>
    </lineage>
</organism>
<dbReference type="EC" id="1.-.-.-" evidence="4 5"/>
<dbReference type="EMBL" id="AB573362">
    <property type="protein sequence ID" value="BAK09495.1"/>
    <property type="molecule type" value="mRNA"/>
</dbReference>
<dbReference type="SMR" id="F1SYF1"/>
<dbReference type="GlyCosmos" id="F1SYF1">
    <property type="glycosylation" value="4 sites, No reported glycans"/>
</dbReference>
<dbReference type="GO" id="GO:0016020">
    <property type="term" value="C:membrane"/>
    <property type="evidence" value="ECO:0007669"/>
    <property type="project" value="UniProtKB-SubCell"/>
</dbReference>
<dbReference type="GO" id="GO:0020037">
    <property type="term" value="F:heme binding"/>
    <property type="evidence" value="ECO:0007669"/>
    <property type="project" value="InterPro"/>
</dbReference>
<dbReference type="GO" id="GO:0005506">
    <property type="term" value="F:iron ion binding"/>
    <property type="evidence" value="ECO:0007669"/>
    <property type="project" value="InterPro"/>
</dbReference>
<dbReference type="GO" id="GO:0004497">
    <property type="term" value="F:monooxygenase activity"/>
    <property type="evidence" value="ECO:0007669"/>
    <property type="project" value="UniProtKB-KW"/>
</dbReference>
<dbReference type="GO" id="GO:0016705">
    <property type="term" value="F:oxidoreductase activity, acting on paired donors, with incorporation or reduction of molecular oxygen"/>
    <property type="evidence" value="ECO:0007669"/>
    <property type="project" value="InterPro"/>
</dbReference>
<dbReference type="CDD" id="cd11065">
    <property type="entry name" value="CYP64-like"/>
    <property type="match status" value="1"/>
</dbReference>
<dbReference type="Gene3D" id="1.10.630.10">
    <property type="entry name" value="Cytochrome P450"/>
    <property type="match status" value="1"/>
</dbReference>
<dbReference type="InterPro" id="IPR001128">
    <property type="entry name" value="Cyt_P450"/>
</dbReference>
<dbReference type="InterPro" id="IPR017972">
    <property type="entry name" value="Cyt_P450_CS"/>
</dbReference>
<dbReference type="InterPro" id="IPR002401">
    <property type="entry name" value="Cyt_P450_E_grp-I"/>
</dbReference>
<dbReference type="InterPro" id="IPR036396">
    <property type="entry name" value="Cyt_P450_sf"/>
</dbReference>
<dbReference type="InterPro" id="IPR050364">
    <property type="entry name" value="Cytochrome_P450_fung"/>
</dbReference>
<dbReference type="PANTHER" id="PTHR46300:SF7">
    <property type="entry name" value="P450, PUTATIVE (EUROFUNG)-RELATED"/>
    <property type="match status" value="1"/>
</dbReference>
<dbReference type="PANTHER" id="PTHR46300">
    <property type="entry name" value="P450, PUTATIVE (EUROFUNG)-RELATED-RELATED"/>
    <property type="match status" value="1"/>
</dbReference>
<dbReference type="Pfam" id="PF00067">
    <property type="entry name" value="p450"/>
    <property type="match status" value="1"/>
</dbReference>
<dbReference type="PRINTS" id="PR00463">
    <property type="entry name" value="EP450I"/>
</dbReference>
<dbReference type="PRINTS" id="PR00385">
    <property type="entry name" value="P450"/>
</dbReference>
<dbReference type="SUPFAM" id="SSF48264">
    <property type="entry name" value="Cytochrome P450"/>
    <property type="match status" value="1"/>
</dbReference>
<dbReference type="PROSITE" id="PS00086">
    <property type="entry name" value="CYTOCHROME_P450"/>
    <property type="match status" value="1"/>
</dbReference>
<keyword id="KW-0325">Glycoprotein</keyword>
<keyword id="KW-0349">Heme</keyword>
<keyword id="KW-0408">Iron</keyword>
<keyword id="KW-0472">Membrane</keyword>
<keyword id="KW-0479">Metal-binding</keyword>
<keyword id="KW-0503">Monooxygenase</keyword>
<keyword id="KW-0560">Oxidoreductase</keyword>
<keyword id="KW-0812">Transmembrane</keyword>
<keyword id="KW-1133">Transmembrane helix</keyword>
<feature type="chain" id="PRO_0000451347" description="Cytochrome P450 monooxygenase 176">
    <location>
        <begin position="1"/>
        <end position="520"/>
    </location>
</feature>
<feature type="transmembrane region" description="Helical" evidence="2">
    <location>
        <begin position="10"/>
        <end position="27"/>
    </location>
</feature>
<feature type="binding site" description="axial binding residue" evidence="1">
    <location>
        <position position="445"/>
    </location>
    <ligand>
        <name>heme</name>
        <dbReference type="ChEBI" id="CHEBI:30413"/>
    </ligand>
    <ligandPart>
        <name>Fe</name>
        <dbReference type="ChEBI" id="CHEBI:18248"/>
    </ligandPart>
</feature>
<feature type="glycosylation site" description="N-linked (GlcNAc...) asparagine" evidence="3">
    <location>
        <position position="6"/>
    </location>
</feature>
<feature type="glycosylation site" description="N-linked (GlcNAc...) asparagine" evidence="3">
    <location>
        <position position="141"/>
    </location>
</feature>
<feature type="glycosylation site" description="N-linked (GlcNAc...) asparagine" evidence="3">
    <location>
        <position position="270"/>
    </location>
</feature>
<feature type="glycosylation site" description="N-linked (GlcNAc...) asparagine" evidence="3">
    <location>
        <position position="517"/>
    </location>
</feature>
<evidence type="ECO:0000250" key="1">
    <source>
        <dbReference type="UniProtKB" id="P04798"/>
    </source>
</evidence>
<evidence type="ECO:0000255" key="2"/>
<evidence type="ECO:0000255" key="3">
    <source>
        <dbReference type="PROSITE-ProRule" id="PRU00498"/>
    </source>
</evidence>
<evidence type="ECO:0000269" key="4">
    <source>
    </source>
</evidence>
<evidence type="ECO:0000269" key="5">
    <source>
    </source>
</evidence>
<evidence type="ECO:0000303" key="6">
    <source>
    </source>
</evidence>
<evidence type="ECO:0000305" key="7"/>
<sequence>MSLVLNRTDLLVVAGALFLTFLTTRFIRAAQRYHLPPGPTRIPLLGNLHQVPLHDQQKTFAEWVKKYGDIIYIQLLSKPFVIVSSVRAAQDLMEKRAVKYSDRPYFLLLCEFVMTRPLMIFMQHGDRWRRLRRWYQGSLENKSVLEGYRPVLRREIGRLLSSLAEAPQDFMSHIKRYNGAVMLDIAYGHRVTSAEDEFMVFADKTISTVTSLGSFAATLVDFFPILRYFPAWTPGSGFKKQALMAKEMWDEMEDIPYRKLRHEMGSDAVNRSFTTFMIGEVSHDGKLGADDEIDIKGSATLMYVAGSDTTMTTMTTFVLAMTLYPEVARKAQAEIDHVVGLSRLPGLDDKDSLPYLECIIKELYRWNPPVPLGVPHRLCVDDNYRGYDIPGGSMIVPNVWAMSRDPSLYPDTKTFRPERFEGLDAQAMKFRDPRKYIFGFGRRICPGRYLADSNVWLFLASVLASMDIGRAHDAAGHEIIPTPSFKDGIISHVEPFQCTIRPRSERAAQLIRESTGNTSA</sequence>
<gene>
    <name evidence="6" type="primary">CYP176</name>
    <name evidence="6" type="synonym">CYP5348J3</name>
</gene>
<comment type="function">
    <text evidence="4 5">Cytochrome P450 monooxygenase that is able to use delta(6)-protoilludene as a substrate to produce delta(6)-protoilludene-5-ol and an unidentified hydroxyprotoilludene (PubMed:30105900). Is also able to use phenanthrene as a substrate for oxidation (PubMed:21938516).</text>
</comment>
<comment type="cofactor">
    <cofactor evidence="1">
        <name>heme</name>
        <dbReference type="ChEBI" id="CHEBI:30413"/>
    </cofactor>
</comment>
<comment type="pathway">
    <text evidence="7">Secondary metabolite biosynthesis.</text>
</comment>
<comment type="subcellular location">
    <subcellularLocation>
        <location evidence="2">Membrane</location>
        <topology evidence="2">Single-pass membrane protein</topology>
    </subcellularLocation>
</comment>
<comment type="similarity">
    <text evidence="7">Belongs to the cytochrome P450 family.</text>
</comment>
<reference key="1">
    <citation type="journal article" date="2012" name="Arch. Microbiol.">
        <title>Molecular identification and functional characterization of cytochrome P450 monooxygenases from the brown-rot basidiomycete Postia placenta.</title>
        <authorList>
            <person name="Ide M."/>
            <person name="Ichinose H."/>
            <person name="Wariishi H."/>
        </authorList>
    </citation>
    <scope>NUCLEOTIDE SEQUENCE [MRNA]</scope>
    <scope>IDENTIFICATION</scope>
    <scope>FUNCTION</scope>
    <scope>CATALYTIC ACTIVITY</scope>
    <source>
        <strain>ATCC 44394 / Madison 698-R</strain>
    </source>
</reference>
<reference key="2">
    <citation type="journal article" date="2018" name="Microb. Biotechnol.">
        <title>Insight into metabolic diversity of the brown-rot basidiomycete Postia placenta responsible for sesquiterpene biosynthesis: semi-comprehensive screening of cytochrome P450 monooxygenase involved in protoilludene metabolism.</title>
        <authorList>
            <person name="Ichinose H."/>
            <person name="Kitaoka T."/>
        </authorList>
    </citation>
    <scope>FUNCTION</scope>
    <scope>CATALYTIC ACTIVITY</scope>
    <source>
        <strain>ATCC 44394 / Madison 698-R</strain>
    </source>
</reference>
<proteinExistence type="evidence at protein level"/>
<protein>
    <recommendedName>
        <fullName evidence="6">Cytochrome P450 monooxygenase 176</fullName>
        <ecNumber evidence="4 5">1.-.-.-</ecNumber>
    </recommendedName>
</protein>